<proteinExistence type="inferred from homology"/>
<sequence>MSYLLALDQGTTSSRALVLDRDGQVKGAAQQTFAQHYPQPGWVEHDPAEILATQFDCARTALERAGVAASALAAVGITNQRETTLLWERSTGRALAPAIVWQDRRTAAACDRLREAGHADTIRASTGLEVDAYFSATKLAWLLDHVPGARARARAGELAFGTVDSWLVWHLSGGALHVTDAGNASRTMLFNIHRCEWDETLLALLDIPPALLPRVVDSSGVCGTTCAEVLGAAVPIAGIGGDQQAATFGQACFAPGMAKNTYGTGCFLLMNTGAAPVTSTNRLLTTIGWRSRGETCYALEGSIFIGGALVQWLRDGLGLIRRAEDVEALAASVPDSEGVVLVPAFTGLGAPYWDAYARGTLFGLTRGTGAAHIARAALEAIALQTVDLVAAMDRDGAGPLAELRVDGGAAANDLLMQIQADLLGVPVVRPKMLETTALGAAYLAGLGVGMWSGIEELASHWRAERRFEPVMAEDRREAAIARWRRAVERARGWVAA</sequence>
<keyword id="KW-0067">ATP-binding</keyword>
<keyword id="KW-0319">Glycerol metabolism</keyword>
<keyword id="KW-0418">Kinase</keyword>
<keyword id="KW-0547">Nucleotide-binding</keyword>
<keyword id="KW-1185">Reference proteome</keyword>
<keyword id="KW-0808">Transferase</keyword>
<comment type="function">
    <text evidence="1">Key enzyme in the regulation of glycerol uptake and metabolism. Catalyzes the phosphorylation of glycerol to yield sn-glycerol 3-phosphate.</text>
</comment>
<comment type="catalytic activity">
    <reaction evidence="1">
        <text>glycerol + ATP = sn-glycerol 3-phosphate + ADP + H(+)</text>
        <dbReference type="Rhea" id="RHEA:21644"/>
        <dbReference type="ChEBI" id="CHEBI:15378"/>
        <dbReference type="ChEBI" id="CHEBI:17754"/>
        <dbReference type="ChEBI" id="CHEBI:30616"/>
        <dbReference type="ChEBI" id="CHEBI:57597"/>
        <dbReference type="ChEBI" id="CHEBI:456216"/>
        <dbReference type="EC" id="2.7.1.30"/>
    </reaction>
</comment>
<comment type="activity regulation">
    <text evidence="1">Inhibited by fructose 1,6-bisphosphate (FBP).</text>
</comment>
<comment type="pathway">
    <text evidence="1">Polyol metabolism; glycerol degradation via glycerol kinase pathway; sn-glycerol 3-phosphate from glycerol: step 1/1.</text>
</comment>
<comment type="similarity">
    <text evidence="1">Belongs to the FGGY kinase family.</text>
</comment>
<gene>
    <name evidence="1" type="primary">glpK</name>
    <name type="ordered locus">AZOSEA25270</name>
    <name type="ORF">ebA4462</name>
</gene>
<reference key="1">
    <citation type="journal article" date="2005" name="Arch. Microbiol.">
        <title>The genome sequence of an anaerobic aromatic-degrading denitrifying bacterium, strain EbN1.</title>
        <authorList>
            <person name="Rabus R."/>
            <person name="Kube M."/>
            <person name="Heider J."/>
            <person name="Beck A."/>
            <person name="Heitmann K."/>
            <person name="Widdel F."/>
            <person name="Reinhardt R."/>
        </authorList>
    </citation>
    <scope>NUCLEOTIDE SEQUENCE [LARGE SCALE GENOMIC DNA]</scope>
    <source>
        <strain>DSM 19018 / LMG 30748 / EbN1</strain>
    </source>
</reference>
<organism>
    <name type="scientific">Aromatoleum aromaticum (strain DSM 19018 / LMG 30748 / EbN1)</name>
    <name type="common">Azoarcus sp. (strain EbN1)</name>
    <dbReference type="NCBI Taxonomy" id="76114"/>
    <lineage>
        <taxon>Bacteria</taxon>
        <taxon>Pseudomonadati</taxon>
        <taxon>Pseudomonadota</taxon>
        <taxon>Betaproteobacteria</taxon>
        <taxon>Rhodocyclales</taxon>
        <taxon>Rhodocyclaceae</taxon>
        <taxon>Aromatoleum</taxon>
    </lineage>
</organism>
<dbReference type="EC" id="2.7.1.30" evidence="1"/>
<dbReference type="EMBL" id="CR555306">
    <property type="protein sequence ID" value="CAI08652.1"/>
    <property type="molecule type" value="Genomic_DNA"/>
</dbReference>
<dbReference type="RefSeq" id="WP_011238336.1">
    <property type="nucleotide sequence ID" value="NC_006513.1"/>
</dbReference>
<dbReference type="SMR" id="Q5P212"/>
<dbReference type="STRING" id="76114.ebA4462"/>
<dbReference type="KEGG" id="eba:ebA4462"/>
<dbReference type="eggNOG" id="COG0554">
    <property type="taxonomic scope" value="Bacteria"/>
</dbReference>
<dbReference type="HOGENOM" id="CLU_009281_2_3_4"/>
<dbReference type="OrthoDB" id="9805576at2"/>
<dbReference type="UniPathway" id="UPA00618">
    <property type="reaction ID" value="UER00672"/>
</dbReference>
<dbReference type="Proteomes" id="UP000006552">
    <property type="component" value="Chromosome"/>
</dbReference>
<dbReference type="GO" id="GO:0005829">
    <property type="term" value="C:cytosol"/>
    <property type="evidence" value="ECO:0007669"/>
    <property type="project" value="TreeGrafter"/>
</dbReference>
<dbReference type="GO" id="GO:0005524">
    <property type="term" value="F:ATP binding"/>
    <property type="evidence" value="ECO:0007669"/>
    <property type="project" value="UniProtKB-UniRule"/>
</dbReference>
<dbReference type="GO" id="GO:0004370">
    <property type="term" value="F:glycerol kinase activity"/>
    <property type="evidence" value="ECO:0000250"/>
    <property type="project" value="UniProtKB"/>
</dbReference>
<dbReference type="GO" id="GO:0019563">
    <property type="term" value="P:glycerol catabolic process"/>
    <property type="evidence" value="ECO:0007669"/>
    <property type="project" value="UniProtKB-UniRule"/>
</dbReference>
<dbReference type="GO" id="GO:0006071">
    <property type="term" value="P:glycerol metabolic process"/>
    <property type="evidence" value="ECO:0000250"/>
    <property type="project" value="UniProtKB"/>
</dbReference>
<dbReference type="GO" id="GO:0006072">
    <property type="term" value="P:glycerol-3-phosphate metabolic process"/>
    <property type="evidence" value="ECO:0007669"/>
    <property type="project" value="InterPro"/>
</dbReference>
<dbReference type="CDD" id="cd07786">
    <property type="entry name" value="FGGY_EcGK_like"/>
    <property type="match status" value="1"/>
</dbReference>
<dbReference type="FunFam" id="3.30.420.40:FF:000007">
    <property type="entry name" value="Glycerol kinase"/>
    <property type="match status" value="1"/>
</dbReference>
<dbReference type="FunFam" id="3.30.420.40:FF:000008">
    <property type="entry name" value="Glycerol kinase"/>
    <property type="match status" value="1"/>
</dbReference>
<dbReference type="Gene3D" id="3.30.420.40">
    <property type="match status" value="2"/>
</dbReference>
<dbReference type="HAMAP" id="MF_00186">
    <property type="entry name" value="Glycerol_kin"/>
    <property type="match status" value="1"/>
</dbReference>
<dbReference type="InterPro" id="IPR043129">
    <property type="entry name" value="ATPase_NBD"/>
</dbReference>
<dbReference type="InterPro" id="IPR000577">
    <property type="entry name" value="Carb_kinase_FGGY"/>
</dbReference>
<dbReference type="InterPro" id="IPR018483">
    <property type="entry name" value="Carb_kinase_FGGY_CS"/>
</dbReference>
<dbReference type="InterPro" id="IPR018485">
    <property type="entry name" value="FGGY_C"/>
</dbReference>
<dbReference type="InterPro" id="IPR018484">
    <property type="entry name" value="FGGY_N"/>
</dbReference>
<dbReference type="InterPro" id="IPR005999">
    <property type="entry name" value="Glycerol_kin"/>
</dbReference>
<dbReference type="NCBIfam" id="TIGR01311">
    <property type="entry name" value="glycerol_kin"/>
    <property type="match status" value="1"/>
</dbReference>
<dbReference type="NCBIfam" id="NF000756">
    <property type="entry name" value="PRK00047.1"/>
    <property type="match status" value="1"/>
</dbReference>
<dbReference type="PANTHER" id="PTHR10196:SF69">
    <property type="entry name" value="GLYCEROL KINASE"/>
    <property type="match status" value="1"/>
</dbReference>
<dbReference type="PANTHER" id="PTHR10196">
    <property type="entry name" value="SUGAR KINASE"/>
    <property type="match status" value="1"/>
</dbReference>
<dbReference type="Pfam" id="PF02782">
    <property type="entry name" value="FGGY_C"/>
    <property type="match status" value="1"/>
</dbReference>
<dbReference type="Pfam" id="PF00370">
    <property type="entry name" value="FGGY_N"/>
    <property type="match status" value="1"/>
</dbReference>
<dbReference type="PIRSF" id="PIRSF000538">
    <property type="entry name" value="GlpK"/>
    <property type="match status" value="1"/>
</dbReference>
<dbReference type="SUPFAM" id="SSF53067">
    <property type="entry name" value="Actin-like ATPase domain"/>
    <property type="match status" value="2"/>
</dbReference>
<dbReference type="PROSITE" id="PS00933">
    <property type="entry name" value="FGGY_KINASES_1"/>
    <property type="match status" value="1"/>
</dbReference>
<dbReference type="PROSITE" id="PS00445">
    <property type="entry name" value="FGGY_KINASES_2"/>
    <property type="match status" value="1"/>
</dbReference>
<name>GLPK_AROAE</name>
<accession>Q5P212</accession>
<protein>
    <recommendedName>
        <fullName evidence="1">Glycerol kinase</fullName>
        <ecNumber evidence="1">2.7.1.30</ecNumber>
    </recommendedName>
    <alternativeName>
        <fullName evidence="1">ATP:glycerol 3-phosphotransferase</fullName>
    </alternativeName>
    <alternativeName>
        <fullName evidence="1">Glycerokinase</fullName>
        <shortName evidence="1">GK</shortName>
    </alternativeName>
</protein>
<evidence type="ECO:0000255" key="1">
    <source>
        <dbReference type="HAMAP-Rule" id="MF_00186"/>
    </source>
</evidence>
<feature type="chain" id="PRO_1000098714" description="Glycerol kinase">
    <location>
        <begin position="1"/>
        <end position="496"/>
    </location>
</feature>
<feature type="binding site" evidence="1">
    <location>
        <position position="11"/>
    </location>
    <ligand>
        <name>ADP</name>
        <dbReference type="ChEBI" id="CHEBI:456216"/>
    </ligand>
</feature>
<feature type="binding site" evidence="1">
    <location>
        <position position="11"/>
    </location>
    <ligand>
        <name>ATP</name>
        <dbReference type="ChEBI" id="CHEBI:30616"/>
    </ligand>
</feature>
<feature type="binding site" evidence="1">
    <location>
        <position position="11"/>
    </location>
    <ligand>
        <name>sn-glycerol 3-phosphate</name>
        <dbReference type="ChEBI" id="CHEBI:57597"/>
    </ligand>
</feature>
<feature type="binding site" evidence="1">
    <location>
        <position position="12"/>
    </location>
    <ligand>
        <name>ATP</name>
        <dbReference type="ChEBI" id="CHEBI:30616"/>
    </ligand>
</feature>
<feature type="binding site" evidence="1">
    <location>
        <position position="13"/>
    </location>
    <ligand>
        <name>ATP</name>
        <dbReference type="ChEBI" id="CHEBI:30616"/>
    </ligand>
</feature>
<feature type="binding site" evidence="1">
    <location>
        <position position="15"/>
    </location>
    <ligand>
        <name>ADP</name>
        <dbReference type="ChEBI" id="CHEBI:456216"/>
    </ligand>
</feature>
<feature type="binding site" evidence="1">
    <location>
        <position position="81"/>
    </location>
    <ligand>
        <name>glycerol</name>
        <dbReference type="ChEBI" id="CHEBI:17754"/>
    </ligand>
</feature>
<feature type="binding site" evidence="1">
    <location>
        <position position="81"/>
    </location>
    <ligand>
        <name>sn-glycerol 3-phosphate</name>
        <dbReference type="ChEBI" id="CHEBI:57597"/>
    </ligand>
</feature>
<feature type="binding site" evidence="1">
    <location>
        <position position="82"/>
    </location>
    <ligand>
        <name>glycerol</name>
        <dbReference type="ChEBI" id="CHEBI:17754"/>
    </ligand>
</feature>
<feature type="binding site" evidence="1">
    <location>
        <position position="82"/>
    </location>
    <ligand>
        <name>sn-glycerol 3-phosphate</name>
        <dbReference type="ChEBI" id="CHEBI:57597"/>
    </ligand>
</feature>
<feature type="binding site" evidence="1">
    <location>
        <position position="133"/>
    </location>
    <ligand>
        <name>glycerol</name>
        <dbReference type="ChEBI" id="CHEBI:17754"/>
    </ligand>
</feature>
<feature type="binding site" evidence="1">
    <location>
        <position position="133"/>
    </location>
    <ligand>
        <name>sn-glycerol 3-phosphate</name>
        <dbReference type="ChEBI" id="CHEBI:57597"/>
    </ligand>
</feature>
<feature type="binding site" evidence="1">
    <location>
        <position position="242"/>
    </location>
    <ligand>
        <name>glycerol</name>
        <dbReference type="ChEBI" id="CHEBI:17754"/>
    </ligand>
</feature>
<feature type="binding site" evidence="1">
    <location>
        <position position="242"/>
    </location>
    <ligand>
        <name>sn-glycerol 3-phosphate</name>
        <dbReference type="ChEBI" id="CHEBI:57597"/>
    </ligand>
</feature>
<feature type="binding site" evidence="1">
    <location>
        <position position="243"/>
    </location>
    <ligand>
        <name>glycerol</name>
        <dbReference type="ChEBI" id="CHEBI:17754"/>
    </ligand>
</feature>
<feature type="binding site" evidence="1">
    <location>
        <position position="264"/>
    </location>
    <ligand>
        <name>ADP</name>
        <dbReference type="ChEBI" id="CHEBI:456216"/>
    </ligand>
</feature>
<feature type="binding site" evidence="1">
    <location>
        <position position="264"/>
    </location>
    <ligand>
        <name>ATP</name>
        <dbReference type="ChEBI" id="CHEBI:30616"/>
    </ligand>
</feature>
<feature type="binding site" evidence="1">
    <location>
        <position position="307"/>
    </location>
    <ligand>
        <name>ADP</name>
        <dbReference type="ChEBI" id="CHEBI:456216"/>
    </ligand>
</feature>
<feature type="binding site" evidence="1">
    <location>
        <position position="307"/>
    </location>
    <ligand>
        <name>ATP</name>
        <dbReference type="ChEBI" id="CHEBI:30616"/>
    </ligand>
</feature>
<feature type="binding site" evidence="1">
    <location>
        <position position="311"/>
    </location>
    <ligand>
        <name>ATP</name>
        <dbReference type="ChEBI" id="CHEBI:30616"/>
    </ligand>
</feature>
<feature type="binding site" evidence="1">
    <location>
        <position position="408"/>
    </location>
    <ligand>
        <name>ADP</name>
        <dbReference type="ChEBI" id="CHEBI:456216"/>
    </ligand>
</feature>
<feature type="binding site" evidence="1">
    <location>
        <position position="408"/>
    </location>
    <ligand>
        <name>ATP</name>
        <dbReference type="ChEBI" id="CHEBI:30616"/>
    </ligand>
</feature>
<feature type="binding site" evidence="1">
    <location>
        <position position="412"/>
    </location>
    <ligand>
        <name>ADP</name>
        <dbReference type="ChEBI" id="CHEBI:456216"/>
    </ligand>
</feature>